<sequence>MSTIQQLIRNTRQPIEDRTKSPALRGCPQRRGVCTRVYTTTPKKPNSALRKVARVRLTSGFEITAYIPGIGHNLQEHSVVLVRGGRVKDLPGVRYHIVRGTLDAVGVKDRKQGRSQYGVKKPK</sequence>
<protein>
    <recommendedName>
        <fullName evidence="2">Small ribosomal subunit protein uS12cz/uS12cy</fullName>
    </recommendedName>
    <alternativeName>
        <fullName evidence="3">30S ribosomal protein S12, chloroplastic</fullName>
    </alternativeName>
</protein>
<proteinExistence type="inferred from homology"/>
<comment type="function">
    <text evidence="1">With S4 and S5 plays an important role in translational accuracy. Located at the interface of the 30S and 50S subunits (By similarity).</text>
</comment>
<comment type="subunit">
    <text evidence="1">Part of the 30S ribosomal subunit.</text>
</comment>
<comment type="subcellular location">
    <subcellularLocation>
        <location>Plastid</location>
        <location>Chloroplast</location>
    </subcellularLocation>
</comment>
<comment type="similarity">
    <text evidence="3">Belongs to the universal ribosomal protein uS12 family.</text>
</comment>
<comment type="sequence caution" evidence="3">
    <conflict type="erroneous gene model prediction">
        <sequence resource="EMBL-CDS" id="ABG79624"/>
    </conflict>
</comment>
<accession>A2T357</accession>
<accession>A2T307</accession>
<feature type="chain" id="PRO_0000296061" description="Small ribosomal subunit protein uS12cz/uS12cy">
    <location>
        <begin position="1"/>
        <end position="123"/>
    </location>
</feature>
<gene>
    <name type="primary">rps12-A</name>
</gene>
<gene>
    <name type="primary">rps12-B</name>
</gene>
<keyword id="KW-0150">Chloroplast</keyword>
<keyword id="KW-0934">Plastid</keyword>
<keyword id="KW-0687">Ribonucleoprotein</keyword>
<keyword id="KW-0689">Ribosomal protein</keyword>
<keyword id="KW-0694">RNA-binding</keyword>
<keyword id="KW-0699">rRNA-binding</keyword>
<reference key="1">
    <citation type="journal article" date="2007" name="Am. Fern J.">
        <title>The complete plastid genome sequence of Angiopteris evecta (G. Forst.) Hoffm. (Marattiaceae).</title>
        <authorList>
            <person name="Roper J.M."/>
            <person name="Hansen S.K."/>
            <person name="Wolf P.G."/>
            <person name="Karol K.G."/>
            <person name="Mandoli D.F."/>
            <person name="Everett K.D.E."/>
            <person name="Kuehl J.V."/>
            <person name="Boore J.L."/>
        </authorList>
    </citation>
    <scope>NUCLEOTIDE SEQUENCE [LARGE SCALE GENOMIC DNA]</scope>
</reference>
<organism>
    <name type="scientific">Angiopteris evecta</name>
    <name type="common">Mule's foot fern</name>
    <name type="synonym">Polypodium evectum</name>
    <dbReference type="NCBI Taxonomy" id="13825"/>
    <lineage>
        <taxon>Eukaryota</taxon>
        <taxon>Viridiplantae</taxon>
        <taxon>Streptophyta</taxon>
        <taxon>Embryophyta</taxon>
        <taxon>Tracheophyta</taxon>
        <taxon>Polypodiopsida</taxon>
        <taxon>Marattiidae</taxon>
        <taxon>Marattiales</taxon>
        <taxon>Marattiaceae</taxon>
        <taxon>Angiopteris</taxon>
    </lineage>
</organism>
<name>RR12_ANGEV</name>
<geneLocation type="chloroplast"/>
<dbReference type="EMBL" id="DQ821119">
    <property type="protein sequence ID" value="ABG79624.1"/>
    <property type="status" value="ALT_SEQ"/>
    <property type="molecule type" value="Genomic_DNA"/>
</dbReference>
<dbReference type="EMBL" id="DQ821119">
    <property type="protein sequence ID" value="ABG79660.1"/>
    <property type="molecule type" value="Genomic_DNA"/>
</dbReference>
<dbReference type="SMR" id="A2T357"/>
<dbReference type="GO" id="GO:0009507">
    <property type="term" value="C:chloroplast"/>
    <property type="evidence" value="ECO:0007669"/>
    <property type="project" value="UniProtKB-SubCell"/>
</dbReference>
<dbReference type="GO" id="GO:0015935">
    <property type="term" value="C:small ribosomal subunit"/>
    <property type="evidence" value="ECO:0007669"/>
    <property type="project" value="InterPro"/>
</dbReference>
<dbReference type="GO" id="GO:0019843">
    <property type="term" value="F:rRNA binding"/>
    <property type="evidence" value="ECO:0007669"/>
    <property type="project" value="UniProtKB-UniRule"/>
</dbReference>
<dbReference type="GO" id="GO:0003735">
    <property type="term" value="F:structural constituent of ribosome"/>
    <property type="evidence" value="ECO:0007669"/>
    <property type="project" value="InterPro"/>
</dbReference>
<dbReference type="GO" id="GO:0006412">
    <property type="term" value="P:translation"/>
    <property type="evidence" value="ECO:0007669"/>
    <property type="project" value="UniProtKB-UniRule"/>
</dbReference>
<dbReference type="CDD" id="cd03368">
    <property type="entry name" value="Ribosomal_S12"/>
    <property type="match status" value="1"/>
</dbReference>
<dbReference type="FunFam" id="2.40.50.140:FF:000008">
    <property type="entry name" value="30S ribosomal protein S12, chloroplastic"/>
    <property type="match status" value="1"/>
</dbReference>
<dbReference type="Gene3D" id="2.40.50.140">
    <property type="entry name" value="Nucleic acid-binding proteins"/>
    <property type="match status" value="1"/>
</dbReference>
<dbReference type="HAMAP" id="MF_00403_B">
    <property type="entry name" value="Ribosomal_uS12_B"/>
    <property type="match status" value="1"/>
</dbReference>
<dbReference type="InterPro" id="IPR012340">
    <property type="entry name" value="NA-bd_OB-fold"/>
</dbReference>
<dbReference type="InterPro" id="IPR006032">
    <property type="entry name" value="Ribosomal_uS12"/>
</dbReference>
<dbReference type="InterPro" id="IPR005679">
    <property type="entry name" value="Ribosomal_uS12_bac"/>
</dbReference>
<dbReference type="NCBIfam" id="TIGR00981">
    <property type="entry name" value="rpsL_bact"/>
    <property type="match status" value="1"/>
</dbReference>
<dbReference type="PANTHER" id="PTHR11652">
    <property type="entry name" value="30S RIBOSOMAL PROTEIN S12 FAMILY MEMBER"/>
    <property type="match status" value="1"/>
</dbReference>
<dbReference type="Pfam" id="PF00164">
    <property type="entry name" value="Ribosom_S12_S23"/>
    <property type="match status" value="1"/>
</dbReference>
<dbReference type="PIRSF" id="PIRSF002133">
    <property type="entry name" value="Ribosomal_S12/S23"/>
    <property type="match status" value="1"/>
</dbReference>
<dbReference type="PRINTS" id="PR01034">
    <property type="entry name" value="RIBOSOMALS12"/>
</dbReference>
<dbReference type="SUPFAM" id="SSF50249">
    <property type="entry name" value="Nucleic acid-binding proteins"/>
    <property type="match status" value="1"/>
</dbReference>
<dbReference type="PROSITE" id="PS00055">
    <property type="entry name" value="RIBOSOMAL_S12"/>
    <property type="match status" value="1"/>
</dbReference>
<evidence type="ECO:0000250" key="1"/>
<evidence type="ECO:0000255" key="2">
    <source>
        <dbReference type="HAMAP-Rule" id="MF_00403"/>
    </source>
</evidence>
<evidence type="ECO:0000305" key="3"/>